<feature type="chain" id="PRO_1000143379" description="ATP synthase subunit alpha">
    <location>
        <begin position="1"/>
        <end position="513"/>
    </location>
</feature>
<feature type="binding site" evidence="1">
    <location>
        <begin position="169"/>
        <end position="176"/>
    </location>
    <ligand>
        <name>ATP</name>
        <dbReference type="ChEBI" id="CHEBI:30616"/>
    </ligand>
</feature>
<feature type="site" description="Required for activity" evidence="1">
    <location>
        <position position="373"/>
    </location>
</feature>
<gene>
    <name evidence="1" type="primary">atpA</name>
    <name type="ordered locus">EcSMS35_4102</name>
</gene>
<dbReference type="EC" id="7.1.2.2" evidence="1"/>
<dbReference type="EMBL" id="CP000970">
    <property type="protein sequence ID" value="ACB18394.1"/>
    <property type="molecule type" value="Genomic_DNA"/>
</dbReference>
<dbReference type="RefSeq" id="WP_001176745.1">
    <property type="nucleotide sequence ID" value="NC_010498.1"/>
</dbReference>
<dbReference type="SMR" id="B1LL61"/>
<dbReference type="GeneID" id="93778233"/>
<dbReference type="KEGG" id="ecm:EcSMS35_4102"/>
<dbReference type="HOGENOM" id="CLU_010091_2_1_6"/>
<dbReference type="Proteomes" id="UP000007011">
    <property type="component" value="Chromosome"/>
</dbReference>
<dbReference type="GO" id="GO:0005886">
    <property type="term" value="C:plasma membrane"/>
    <property type="evidence" value="ECO:0007669"/>
    <property type="project" value="UniProtKB-SubCell"/>
</dbReference>
<dbReference type="GO" id="GO:0045259">
    <property type="term" value="C:proton-transporting ATP synthase complex"/>
    <property type="evidence" value="ECO:0007669"/>
    <property type="project" value="UniProtKB-KW"/>
</dbReference>
<dbReference type="GO" id="GO:0043531">
    <property type="term" value="F:ADP binding"/>
    <property type="evidence" value="ECO:0007669"/>
    <property type="project" value="TreeGrafter"/>
</dbReference>
<dbReference type="GO" id="GO:0005524">
    <property type="term" value="F:ATP binding"/>
    <property type="evidence" value="ECO:0007669"/>
    <property type="project" value="UniProtKB-UniRule"/>
</dbReference>
<dbReference type="GO" id="GO:0046933">
    <property type="term" value="F:proton-transporting ATP synthase activity, rotational mechanism"/>
    <property type="evidence" value="ECO:0007669"/>
    <property type="project" value="UniProtKB-UniRule"/>
</dbReference>
<dbReference type="CDD" id="cd18113">
    <property type="entry name" value="ATP-synt_F1_alpha_C"/>
    <property type="match status" value="1"/>
</dbReference>
<dbReference type="CDD" id="cd18116">
    <property type="entry name" value="ATP-synt_F1_alpha_N"/>
    <property type="match status" value="1"/>
</dbReference>
<dbReference type="CDD" id="cd01132">
    <property type="entry name" value="F1-ATPase_alpha_CD"/>
    <property type="match status" value="1"/>
</dbReference>
<dbReference type="FunFam" id="1.20.150.20:FF:000001">
    <property type="entry name" value="ATP synthase subunit alpha"/>
    <property type="match status" value="1"/>
</dbReference>
<dbReference type="FunFam" id="2.40.30.20:FF:000001">
    <property type="entry name" value="ATP synthase subunit alpha"/>
    <property type="match status" value="1"/>
</dbReference>
<dbReference type="FunFam" id="3.40.50.300:FF:000002">
    <property type="entry name" value="ATP synthase subunit alpha"/>
    <property type="match status" value="1"/>
</dbReference>
<dbReference type="Gene3D" id="2.40.30.20">
    <property type="match status" value="1"/>
</dbReference>
<dbReference type="Gene3D" id="1.20.150.20">
    <property type="entry name" value="ATP synthase alpha/beta chain, C-terminal domain"/>
    <property type="match status" value="1"/>
</dbReference>
<dbReference type="Gene3D" id="3.40.50.300">
    <property type="entry name" value="P-loop containing nucleotide triphosphate hydrolases"/>
    <property type="match status" value="1"/>
</dbReference>
<dbReference type="HAMAP" id="MF_01346">
    <property type="entry name" value="ATP_synth_alpha_bact"/>
    <property type="match status" value="1"/>
</dbReference>
<dbReference type="InterPro" id="IPR023366">
    <property type="entry name" value="ATP_synth_asu-like_sf"/>
</dbReference>
<dbReference type="InterPro" id="IPR000793">
    <property type="entry name" value="ATP_synth_asu_C"/>
</dbReference>
<dbReference type="InterPro" id="IPR038376">
    <property type="entry name" value="ATP_synth_asu_C_sf"/>
</dbReference>
<dbReference type="InterPro" id="IPR033732">
    <property type="entry name" value="ATP_synth_F1_a_nt-bd_dom"/>
</dbReference>
<dbReference type="InterPro" id="IPR005294">
    <property type="entry name" value="ATP_synth_F1_asu"/>
</dbReference>
<dbReference type="InterPro" id="IPR020003">
    <property type="entry name" value="ATPase_a/bsu_AS"/>
</dbReference>
<dbReference type="InterPro" id="IPR004100">
    <property type="entry name" value="ATPase_F1/V1/A1_a/bsu_N"/>
</dbReference>
<dbReference type="InterPro" id="IPR036121">
    <property type="entry name" value="ATPase_F1/V1/A1_a/bsu_N_sf"/>
</dbReference>
<dbReference type="InterPro" id="IPR000194">
    <property type="entry name" value="ATPase_F1/V1/A1_a/bsu_nucl-bd"/>
</dbReference>
<dbReference type="InterPro" id="IPR027417">
    <property type="entry name" value="P-loop_NTPase"/>
</dbReference>
<dbReference type="NCBIfam" id="TIGR00962">
    <property type="entry name" value="atpA"/>
    <property type="match status" value="1"/>
</dbReference>
<dbReference type="NCBIfam" id="NF009884">
    <property type="entry name" value="PRK13343.1"/>
    <property type="match status" value="1"/>
</dbReference>
<dbReference type="PANTHER" id="PTHR48082">
    <property type="entry name" value="ATP SYNTHASE SUBUNIT ALPHA, MITOCHONDRIAL"/>
    <property type="match status" value="1"/>
</dbReference>
<dbReference type="PANTHER" id="PTHR48082:SF2">
    <property type="entry name" value="ATP SYNTHASE SUBUNIT ALPHA, MITOCHONDRIAL"/>
    <property type="match status" value="1"/>
</dbReference>
<dbReference type="Pfam" id="PF00006">
    <property type="entry name" value="ATP-synt_ab"/>
    <property type="match status" value="1"/>
</dbReference>
<dbReference type="Pfam" id="PF00306">
    <property type="entry name" value="ATP-synt_ab_C"/>
    <property type="match status" value="1"/>
</dbReference>
<dbReference type="Pfam" id="PF02874">
    <property type="entry name" value="ATP-synt_ab_N"/>
    <property type="match status" value="1"/>
</dbReference>
<dbReference type="SUPFAM" id="SSF47917">
    <property type="entry name" value="C-terminal domain of alpha and beta subunits of F1 ATP synthase"/>
    <property type="match status" value="1"/>
</dbReference>
<dbReference type="SUPFAM" id="SSF50615">
    <property type="entry name" value="N-terminal domain of alpha and beta subunits of F1 ATP synthase"/>
    <property type="match status" value="1"/>
</dbReference>
<dbReference type="SUPFAM" id="SSF52540">
    <property type="entry name" value="P-loop containing nucleoside triphosphate hydrolases"/>
    <property type="match status" value="1"/>
</dbReference>
<dbReference type="PROSITE" id="PS00152">
    <property type="entry name" value="ATPASE_ALPHA_BETA"/>
    <property type="match status" value="1"/>
</dbReference>
<evidence type="ECO:0000255" key="1">
    <source>
        <dbReference type="HAMAP-Rule" id="MF_01346"/>
    </source>
</evidence>
<keyword id="KW-0066">ATP synthesis</keyword>
<keyword id="KW-0067">ATP-binding</keyword>
<keyword id="KW-0997">Cell inner membrane</keyword>
<keyword id="KW-1003">Cell membrane</keyword>
<keyword id="KW-0139">CF(1)</keyword>
<keyword id="KW-0375">Hydrogen ion transport</keyword>
<keyword id="KW-0406">Ion transport</keyword>
<keyword id="KW-0472">Membrane</keyword>
<keyword id="KW-0547">Nucleotide-binding</keyword>
<keyword id="KW-1278">Translocase</keyword>
<keyword id="KW-0813">Transport</keyword>
<comment type="function">
    <text evidence="1">Produces ATP from ADP in the presence of a proton gradient across the membrane. The alpha chain is a regulatory subunit.</text>
</comment>
<comment type="catalytic activity">
    <reaction evidence="1">
        <text>ATP + H2O + 4 H(+)(in) = ADP + phosphate + 5 H(+)(out)</text>
        <dbReference type="Rhea" id="RHEA:57720"/>
        <dbReference type="ChEBI" id="CHEBI:15377"/>
        <dbReference type="ChEBI" id="CHEBI:15378"/>
        <dbReference type="ChEBI" id="CHEBI:30616"/>
        <dbReference type="ChEBI" id="CHEBI:43474"/>
        <dbReference type="ChEBI" id="CHEBI:456216"/>
        <dbReference type="EC" id="7.1.2.2"/>
    </reaction>
</comment>
<comment type="subunit">
    <text evidence="1">F-type ATPases have 2 components, CF(1) - the catalytic core - and CF(0) - the membrane proton channel. CF(1) has five subunits: alpha(3), beta(3), gamma(1), delta(1), epsilon(1). CF(0) has three main subunits: a(1), b(2) and c(9-12). The alpha and beta chains form an alternating ring which encloses part of the gamma chain. CF(1) is attached to CF(0) by a central stalk formed by the gamma and epsilon chains, while a peripheral stalk is formed by the delta and b chains.</text>
</comment>
<comment type="subcellular location">
    <subcellularLocation>
        <location evidence="1">Cell inner membrane</location>
        <topology evidence="1">Peripheral membrane protein</topology>
    </subcellularLocation>
</comment>
<comment type="similarity">
    <text evidence="1">Belongs to the ATPase alpha/beta chains family.</text>
</comment>
<organism>
    <name type="scientific">Escherichia coli (strain SMS-3-5 / SECEC)</name>
    <dbReference type="NCBI Taxonomy" id="439855"/>
    <lineage>
        <taxon>Bacteria</taxon>
        <taxon>Pseudomonadati</taxon>
        <taxon>Pseudomonadota</taxon>
        <taxon>Gammaproteobacteria</taxon>
        <taxon>Enterobacterales</taxon>
        <taxon>Enterobacteriaceae</taxon>
        <taxon>Escherichia</taxon>
    </lineage>
</organism>
<sequence length="513" mass="55222">MQLNSTEISELIKQRIAQFNVVSEAHNEGTIVSVSDGVIRIHGLADCMQGEMISLPGNRYAIALNLERDSVGAVVMGPYADLAEGMKVKCTGRILEVPVGRGLLGRVVNTLGAPIDGKGPLDHDGFSAVEAIAPGVIERQSVDQPVQTGYKAVDSMIPIGRGQRELIIGDRQTGKTALAIDAIINQRDSGIKCIYVAIGQKASTISNVVRKLEEHGALANTIVVVATASESAALQYLAPYAGCAMGEYFRDRGEDALIIYDDLSKQAVAYRQISLLLRRPPGREAFPGDVFYLHSRLLERAARVNAEYVEAFTKGEVKGKTGSLTALPIIETQAGDVSAFVPTNVISITDGQIFLETNLFNAGIRPAVNPGISVSRVGGAAQTKIMKKLSGGIRTALAQYRELAAFSQFASDLDDATRKQLDHGQKVTELLKQKQYAPMSVAQQSLVLFAAERGYLADVELSKIGSFEAALLAYVDRDHAPLMQEINQTGGYNDEIEGKLKGILDSFKATQSW</sequence>
<protein>
    <recommendedName>
        <fullName evidence="1">ATP synthase subunit alpha</fullName>
        <ecNumber evidence="1">7.1.2.2</ecNumber>
    </recommendedName>
    <alternativeName>
        <fullName evidence="1">ATP synthase F1 sector subunit alpha</fullName>
    </alternativeName>
    <alternativeName>
        <fullName evidence="1">F-ATPase subunit alpha</fullName>
    </alternativeName>
</protein>
<proteinExistence type="inferred from homology"/>
<name>ATPA_ECOSM</name>
<accession>B1LL61</accession>
<reference key="1">
    <citation type="journal article" date="2008" name="J. Bacteriol.">
        <title>Insights into the environmental resistance gene pool from the genome sequence of the multidrug-resistant environmental isolate Escherichia coli SMS-3-5.</title>
        <authorList>
            <person name="Fricke W.F."/>
            <person name="Wright M.S."/>
            <person name="Lindell A.H."/>
            <person name="Harkins D.M."/>
            <person name="Baker-Austin C."/>
            <person name="Ravel J."/>
            <person name="Stepanauskas R."/>
        </authorList>
    </citation>
    <scope>NUCLEOTIDE SEQUENCE [LARGE SCALE GENOMIC DNA]</scope>
    <source>
        <strain>SMS-3-5 / SECEC</strain>
    </source>
</reference>